<reference key="1">
    <citation type="journal article" date="2010" name="J. Bacteriol.">
        <title>Complete genome sequence of Beijerinckia indica subsp. indica.</title>
        <authorList>
            <person name="Tamas I."/>
            <person name="Dedysh S.N."/>
            <person name="Liesack W."/>
            <person name="Stott M.B."/>
            <person name="Alam M."/>
            <person name="Murrell J.C."/>
            <person name="Dunfield P.F."/>
        </authorList>
    </citation>
    <scope>NUCLEOTIDE SEQUENCE [LARGE SCALE GENOMIC DNA]</scope>
    <source>
        <strain>ATCC 9039 / DSM 1715 / NCIMB 8712</strain>
    </source>
</reference>
<comment type="function">
    <text evidence="1">Catalyzes the reversible conversion of 2-phosphoglycerate (2-PG) into phosphoenolpyruvate (PEP). It is essential for the degradation of carbohydrates via glycolysis.</text>
</comment>
<comment type="catalytic activity">
    <reaction evidence="1">
        <text>(2R)-2-phosphoglycerate = phosphoenolpyruvate + H2O</text>
        <dbReference type="Rhea" id="RHEA:10164"/>
        <dbReference type="ChEBI" id="CHEBI:15377"/>
        <dbReference type="ChEBI" id="CHEBI:58289"/>
        <dbReference type="ChEBI" id="CHEBI:58702"/>
        <dbReference type="EC" id="4.2.1.11"/>
    </reaction>
</comment>
<comment type="cofactor">
    <cofactor evidence="1">
        <name>Mg(2+)</name>
        <dbReference type="ChEBI" id="CHEBI:18420"/>
    </cofactor>
    <text evidence="1">Binds a second Mg(2+) ion via substrate during catalysis.</text>
</comment>
<comment type="pathway">
    <text evidence="1">Carbohydrate degradation; glycolysis; pyruvate from D-glyceraldehyde 3-phosphate: step 4/5.</text>
</comment>
<comment type="subcellular location">
    <subcellularLocation>
        <location evidence="1">Cytoplasm</location>
    </subcellularLocation>
    <subcellularLocation>
        <location evidence="1">Secreted</location>
    </subcellularLocation>
    <subcellularLocation>
        <location evidence="1">Cell surface</location>
    </subcellularLocation>
    <text evidence="1">Fractions of enolase are present in both the cytoplasm and on the cell surface.</text>
</comment>
<comment type="similarity">
    <text evidence="1">Belongs to the enolase family.</text>
</comment>
<organism>
    <name type="scientific">Beijerinckia indica subsp. indica (strain ATCC 9039 / DSM 1715 / NCIMB 8712)</name>
    <dbReference type="NCBI Taxonomy" id="395963"/>
    <lineage>
        <taxon>Bacteria</taxon>
        <taxon>Pseudomonadati</taxon>
        <taxon>Pseudomonadota</taxon>
        <taxon>Alphaproteobacteria</taxon>
        <taxon>Hyphomicrobiales</taxon>
        <taxon>Beijerinckiaceae</taxon>
        <taxon>Beijerinckia</taxon>
    </lineage>
</organism>
<keyword id="KW-0963">Cytoplasm</keyword>
<keyword id="KW-0324">Glycolysis</keyword>
<keyword id="KW-0456">Lyase</keyword>
<keyword id="KW-0460">Magnesium</keyword>
<keyword id="KW-0479">Metal-binding</keyword>
<keyword id="KW-1185">Reference proteome</keyword>
<keyword id="KW-0964">Secreted</keyword>
<sequence>MTAIVDIAAREILDSRGNPTIEVDVTLEDGSQGRAAVPSGASTGAHEAVELRDGDKSRFGGKGVLKAVENVDRDIFDALSGLDAEDQVHIDQVMLELDGTPNKGRLGANAILGVSLAVAKAAAEASSLPLYRYVGGVQARVLPVPMMNIINGGAHADNPIDFQEFMILPVGAPNLKEAVRWGAEVFHVLKGALKKAGHNTNVGDEGGFAPNLPSAEASLEFIVKAITDAGFKPGEDIYLGLDCASTEFFKDGKYVYEGEGKTRNLEEQAAYLGKLVESFPIVTIEDGMSEDDWEGWKILTDLIGKKCQLVGDDLFVTNVSRLSQGISKGIANSILVKVNQIGSLTETLAAVDMAQRAGYTAVMSHRSGETEDSTIADLAVATNCGQIKTGSLARSDRLAKYNQLIRIEEELGSQAVYAGRAALKALA</sequence>
<protein>
    <recommendedName>
        <fullName evidence="1">Enolase</fullName>
        <ecNumber evidence="1">4.2.1.11</ecNumber>
    </recommendedName>
    <alternativeName>
        <fullName evidence="1">2-phospho-D-glycerate hydro-lyase</fullName>
    </alternativeName>
    <alternativeName>
        <fullName evidence="1">2-phosphoglycerate dehydratase</fullName>
    </alternativeName>
</protein>
<proteinExistence type="inferred from homology"/>
<name>ENO_BEII9</name>
<dbReference type="EC" id="4.2.1.11" evidence="1"/>
<dbReference type="EMBL" id="CP001016">
    <property type="protein sequence ID" value="ACB95103.1"/>
    <property type="molecule type" value="Genomic_DNA"/>
</dbReference>
<dbReference type="RefSeq" id="WP_012384460.1">
    <property type="nucleotide sequence ID" value="NC_010581.1"/>
</dbReference>
<dbReference type="SMR" id="B2IKR4"/>
<dbReference type="STRING" id="395963.Bind_1466"/>
<dbReference type="KEGG" id="bid:Bind_1466"/>
<dbReference type="eggNOG" id="COG0148">
    <property type="taxonomic scope" value="Bacteria"/>
</dbReference>
<dbReference type="HOGENOM" id="CLU_031223_2_1_5"/>
<dbReference type="OrthoDB" id="9804716at2"/>
<dbReference type="UniPathway" id="UPA00109">
    <property type="reaction ID" value="UER00187"/>
</dbReference>
<dbReference type="Proteomes" id="UP000001695">
    <property type="component" value="Chromosome"/>
</dbReference>
<dbReference type="GO" id="GO:0009986">
    <property type="term" value="C:cell surface"/>
    <property type="evidence" value="ECO:0007669"/>
    <property type="project" value="UniProtKB-SubCell"/>
</dbReference>
<dbReference type="GO" id="GO:0005576">
    <property type="term" value="C:extracellular region"/>
    <property type="evidence" value="ECO:0007669"/>
    <property type="project" value="UniProtKB-SubCell"/>
</dbReference>
<dbReference type="GO" id="GO:0000015">
    <property type="term" value="C:phosphopyruvate hydratase complex"/>
    <property type="evidence" value="ECO:0007669"/>
    <property type="project" value="InterPro"/>
</dbReference>
<dbReference type="GO" id="GO:0000287">
    <property type="term" value="F:magnesium ion binding"/>
    <property type="evidence" value="ECO:0007669"/>
    <property type="project" value="UniProtKB-UniRule"/>
</dbReference>
<dbReference type="GO" id="GO:0004634">
    <property type="term" value="F:phosphopyruvate hydratase activity"/>
    <property type="evidence" value="ECO:0007669"/>
    <property type="project" value="UniProtKB-UniRule"/>
</dbReference>
<dbReference type="GO" id="GO:0006096">
    <property type="term" value="P:glycolytic process"/>
    <property type="evidence" value="ECO:0007669"/>
    <property type="project" value="UniProtKB-UniRule"/>
</dbReference>
<dbReference type="CDD" id="cd03313">
    <property type="entry name" value="enolase"/>
    <property type="match status" value="1"/>
</dbReference>
<dbReference type="FunFam" id="3.20.20.120:FF:000001">
    <property type="entry name" value="Enolase"/>
    <property type="match status" value="1"/>
</dbReference>
<dbReference type="FunFam" id="3.30.390.10:FF:000001">
    <property type="entry name" value="Enolase"/>
    <property type="match status" value="1"/>
</dbReference>
<dbReference type="Gene3D" id="3.20.20.120">
    <property type="entry name" value="Enolase-like C-terminal domain"/>
    <property type="match status" value="1"/>
</dbReference>
<dbReference type="Gene3D" id="3.30.390.10">
    <property type="entry name" value="Enolase-like, N-terminal domain"/>
    <property type="match status" value="1"/>
</dbReference>
<dbReference type="HAMAP" id="MF_00318">
    <property type="entry name" value="Enolase"/>
    <property type="match status" value="1"/>
</dbReference>
<dbReference type="InterPro" id="IPR000941">
    <property type="entry name" value="Enolase"/>
</dbReference>
<dbReference type="InterPro" id="IPR036849">
    <property type="entry name" value="Enolase-like_C_sf"/>
</dbReference>
<dbReference type="InterPro" id="IPR029017">
    <property type="entry name" value="Enolase-like_N"/>
</dbReference>
<dbReference type="InterPro" id="IPR020810">
    <property type="entry name" value="Enolase_C"/>
</dbReference>
<dbReference type="InterPro" id="IPR020809">
    <property type="entry name" value="Enolase_CS"/>
</dbReference>
<dbReference type="InterPro" id="IPR020811">
    <property type="entry name" value="Enolase_N"/>
</dbReference>
<dbReference type="NCBIfam" id="TIGR01060">
    <property type="entry name" value="eno"/>
    <property type="match status" value="1"/>
</dbReference>
<dbReference type="PANTHER" id="PTHR11902">
    <property type="entry name" value="ENOLASE"/>
    <property type="match status" value="1"/>
</dbReference>
<dbReference type="PANTHER" id="PTHR11902:SF1">
    <property type="entry name" value="ENOLASE"/>
    <property type="match status" value="1"/>
</dbReference>
<dbReference type="Pfam" id="PF00113">
    <property type="entry name" value="Enolase_C"/>
    <property type="match status" value="1"/>
</dbReference>
<dbReference type="Pfam" id="PF03952">
    <property type="entry name" value="Enolase_N"/>
    <property type="match status" value="1"/>
</dbReference>
<dbReference type="PIRSF" id="PIRSF001400">
    <property type="entry name" value="Enolase"/>
    <property type="match status" value="1"/>
</dbReference>
<dbReference type="PRINTS" id="PR00148">
    <property type="entry name" value="ENOLASE"/>
</dbReference>
<dbReference type="SFLD" id="SFLDF00002">
    <property type="entry name" value="enolase"/>
    <property type="match status" value="1"/>
</dbReference>
<dbReference type="SFLD" id="SFLDG00178">
    <property type="entry name" value="enolase"/>
    <property type="match status" value="1"/>
</dbReference>
<dbReference type="SMART" id="SM01192">
    <property type="entry name" value="Enolase_C"/>
    <property type="match status" value="1"/>
</dbReference>
<dbReference type="SMART" id="SM01193">
    <property type="entry name" value="Enolase_N"/>
    <property type="match status" value="1"/>
</dbReference>
<dbReference type="SUPFAM" id="SSF51604">
    <property type="entry name" value="Enolase C-terminal domain-like"/>
    <property type="match status" value="1"/>
</dbReference>
<dbReference type="SUPFAM" id="SSF54826">
    <property type="entry name" value="Enolase N-terminal domain-like"/>
    <property type="match status" value="1"/>
</dbReference>
<dbReference type="PROSITE" id="PS00164">
    <property type="entry name" value="ENOLASE"/>
    <property type="match status" value="1"/>
</dbReference>
<gene>
    <name evidence="1" type="primary">eno</name>
    <name type="ordered locus">Bind_1466</name>
</gene>
<feature type="chain" id="PRO_1000115829" description="Enolase">
    <location>
        <begin position="1"/>
        <end position="427"/>
    </location>
</feature>
<feature type="active site" description="Proton donor" evidence="1">
    <location>
        <position position="205"/>
    </location>
</feature>
<feature type="active site" description="Proton acceptor" evidence="1">
    <location>
        <position position="337"/>
    </location>
</feature>
<feature type="binding site" evidence="1">
    <location>
        <position position="163"/>
    </location>
    <ligand>
        <name>(2R)-2-phosphoglycerate</name>
        <dbReference type="ChEBI" id="CHEBI:58289"/>
    </ligand>
</feature>
<feature type="binding site" evidence="1">
    <location>
        <position position="242"/>
    </location>
    <ligand>
        <name>Mg(2+)</name>
        <dbReference type="ChEBI" id="CHEBI:18420"/>
    </ligand>
</feature>
<feature type="binding site" evidence="1">
    <location>
        <position position="285"/>
    </location>
    <ligand>
        <name>Mg(2+)</name>
        <dbReference type="ChEBI" id="CHEBI:18420"/>
    </ligand>
</feature>
<feature type="binding site" evidence="1">
    <location>
        <position position="312"/>
    </location>
    <ligand>
        <name>Mg(2+)</name>
        <dbReference type="ChEBI" id="CHEBI:18420"/>
    </ligand>
</feature>
<feature type="binding site" evidence="1">
    <location>
        <position position="337"/>
    </location>
    <ligand>
        <name>(2R)-2-phosphoglycerate</name>
        <dbReference type="ChEBI" id="CHEBI:58289"/>
    </ligand>
</feature>
<feature type="binding site" evidence="1">
    <location>
        <position position="366"/>
    </location>
    <ligand>
        <name>(2R)-2-phosphoglycerate</name>
        <dbReference type="ChEBI" id="CHEBI:58289"/>
    </ligand>
</feature>
<feature type="binding site" evidence="1">
    <location>
        <position position="367"/>
    </location>
    <ligand>
        <name>(2R)-2-phosphoglycerate</name>
        <dbReference type="ChEBI" id="CHEBI:58289"/>
    </ligand>
</feature>
<feature type="binding site" evidence="1">
    <location>
        <position position="388"/>
    </location>
    <ligand>
        <name>(2R)-2-phosphoglycerate</name>
        <dbReference type="ChEBI" id="CHEBI:58289"/>
    </ligand>
</feature>
<accession>B2IKR4</accession>
<evidence type="ECO:0000255" key="1">
    <source>
        <dbReference type="HAMAP-Rule" id="MF_00318"/>
    </source>
</evidence>